<gene>
    <name evidence="1" type="primary">napA</name>
    <name type="ordered locus">SPA0605</name>
</gene>
<accession>Q5PI61</accession>
<evidence type="ECO:0000255" key="1">
    <source>
        <dbReference type="HAMAP-Rule" id="MF_01630"/>
    </source>
</evidence>
<proteinExistence type="inferred from homology"/>
<name>NAPA_SALPA</name>
<feature type="signal peptide" description="Tat-type signal" evidence="1">
    <location>
        <begin position="1"/>
        <end position="31"/>
    </location>
</feature>
<feature type="chain" id="PRO_0000046000" description="Periplasmic nitrate reductase" evidence="1">
    <location>
        <begin position="32"/>
        <end position="828"/>
    </location>
</feature>
<feature type="domain" description="4Fe-4S Mo/W bis-MGD-type" evidence="1">
    <location>
        <begin position="39"/>
        <end position="95"/>
    </location>
</feature>
<feature type="binding site" evidence="1">
    <location>
        <position position="46"/>
    </location>
    <ligand>
        <name>[4Fe-4S] cluster</name>
        <dbReference type="ChEBI" id="CHEBI:49883"/>
    </ligand>
</feature>
<feature type="binding site" evidence="1">
    <location>
        <position position="49"/>
    </location>
    <ligand>
        <name>[4Fe-4S] cluster</name>
        <dbReference type="ChEBI" id="CHEBI:49883"/>
    </ligand>
</feature>
<feature type="binding site" evidence="1">
    <location>
        <position position="53"/>
    </location>
    <ligand>
        <name>[4Fe-4S] cluster</name>
        <dbReference type="ChEBI" id="CHEBI:49883"/>
    </ligand>
</feature>
<feature type="binding site" evidence="1">
    <location>
        <position position="81"/>
    </location>
    <ligand>
        <name>[4Fe-4S] cluster</name>
        <dbReference type="ChEBI" id="CHEBI:49883"/>
    </ligand>
</feature>
<feature type="binding site" evidence="1">
    <location>
        <position position="83"/>
    </location>
    <ligand>
        <name>Mo-bis(molybdopterin guanine dinucleotide)</name>
        <dbReference type="ChEBI" id="CHEBI:60539"/>
    </ligand>
</feature>
<feature type="binding site" evidence="1">
    <location>
        <position position="150"/>
    </location>
    <ligand>
        <name>Mo-bis(molybdopterin guanine dinucleotide)</name>
        <dbReference type="ChEBI" id="CHEBI:60539"/>
    </ligand>
</feature>
<feature type="binding site" evidence="1">
    <location>
        <position position="175"/>
    </location>
    <ligand>
        <name>Mo-bis(molybdopterin guanine dinucleotide)</name>
        <dbReference type="ChEBI" id="CHEBI:60539"/>
    </ligand>
</feature>
<feature type="binding site" evidence="1">
    <location>
        <position position="179"/>
    </location>
    <ligand>
        <name>Mo-bis(molybdopterin guanine dinucleotide)</name>
        <dbReference type="ChEBI" id="CHEBI:60539"/>
    </ligand>
</feature>
<feature type="binding site" evidence="1">
    <location>
        <begin position="212"/>
        <end position="219"/>
    </location>
    <ligand>
        <name>Mo-bis(molybdopterin guanine dinucleotide)</name>
        <dbReference type="ChEBI" id="CHEBI:60539"/>
    </ligand>
</feature>
<feature type="binding site" evidence="1">
    <location>
        <begin position="243"/>
        <end position="247"/>
    </location>
    <ligand>
        <name>Mo-bis(molybdopterin guanine dinucleotide)</name>
        <dbReference type="ChEBI" id="CHEBI:60539"/>
    </ligand>
</feature>
<feature type="binding site" evidence="1">
    <location>
        <begin position="262"/>
        <end position="264"/>
    </location>
    <ligand>
        <name>Mo-bis(molybdopterin guanine dinucleotide)</name>
        <dbReference type="ChEBI" id="CHEBI:60539"/>
    </ligand>
</feature>
<feature type="binding site" evidence="1">
    <location>
        <position position="372"/>
    </location>
    <ligand>
        <name>Mo-bis(molybdopterin guanine dinucleotide)</name>
        <dbReference type="ChEBI" id="CHEBI:60539"/>
    </ligand>
</feature>
<feature type="binding site" evidence="1">
    <location>
        <position position="376"/>
    </location>
    <ligand>
        <name>Mo-bis(molybdopterin guanine dinucleotide)</name>
        <dbReference type="ChEBI" id="CHEBI:60539"/>
    </ligand>
</feature>
<feature type="binding site" evidence="1">
    <location>
        <position position="482"/>
    </location>
    <ligand>
        <name>Mo-bis(molybdopterin guanine dinucleotide)</name>
        <dbReference type="ChEBI" id="CHEBI:60539"/>
    </ligand>
</feature>
<feature type="binding site" evidence="1">
    <location>
        <begin position="508"/>
        <end position="509"/>
    </location>
    <ligand>
        <name>Mo-bis(molybdopterin guanine dinucleotide)</name>
        <dbReference type="ChEBI" id="CHEBI:60539"/>
    </ligand>
</feature>
<feature type="binding site" evidence="1">
    <location>
        <position position="531"/>
    </location>
    <ligand>
        <name>Mo-bis(molybdopterin guanine dinucleotide)</name>
        <dbReference type="ChEBI" id="CHEBI:60539"/>
    </ligand>
</feature>
<feature type="binding site" evidence="1">
    <location>
        <position position="558"/>
    </location>
    <ligand>
        <name>Mo-bis(molybdopterin guanine dinucleotide)</name>
        <dbReference type="ChEBI" id="CHEBI:60539"/>
    </ligand>
</feature>
<feature type="binding site" evidence="1">
    <location>
        <begin position="718"/>
        <end position="727"/>
    </location>
    <ligand>
        <name>Mo-bis(molybdopterin guanine dinucleotide)</name>
        <dbReference type="ChEBI" id="CHEBI:60539"/>
    </ligand>
</feature>
<feature type="binding site" evidence="1">
    <location>
        <position position="794"/>
    </location>
    <ligand>
        <name>substrate</name>
    </ligand>
</feature>
<feature type="binding site" evidence="1">
    <location>
        <position position="802"/>
    </location>
    <ligand>
        <name>Mo-bis(molybdopterin guanine dinucleotide)</name>
        <dbReference type="ChEBI" id="CHEBI:60539"/>
    </ligand>
</feature>
<feature type="binding site" evidence="1">
    <location>
        <position position="819"/>
    </location>
    <ligand>
        <name>Mo-bis(molybdopterin guanine dinucleotide)</name>
        <dbReference type="ChEBI" id="CHEBI:60539"/>
    </ligand>
</feature>
<comment type="function">
    <text evidence="1">Catalytic subunit of the periplasmic nitrate reductase complex NapAB. Receives electrons from NapB and catalyzes the reduction of nitrate to nitrite.</text>
</comment>
<comment type="catalytic activity">
    <reaction evidence="1">
        <text>2 Fe(II)-[cytochrome] + nitrate + 2 H(+) = 2 Fe(III)-[cytochrome] + nitrite + H2O</text>
        <dbReference type="Rhea" id="RHEA:12909"/>
        <dbReference type="Rhea" id="RHEA-COMP:11777"/>
        <dbReference type="Rhea" id="RHEA-COMP:11778"/>
        <dbReference type="ChEBI" id="CHEBI:15377"/>
        <dbReference type="ChEBI" id="CHEBI:15378"/>
        <dbReference type="ChEBI" id="CHEBI:16301"/>
        <dbReference type="ChEBI" id="CHEBI:17632"/>
        <dbReference type="ChEBI" id="CHEBI:29033"/>
        <dbReference type="ChEBI" id="CHEBI:29034"/>
        <dbReference type="EC" id="1.9.6.1"/>
    </reaction>
</comment>
<comment type="cofactor">
    <cofactor evidence="1">
        <name>[4Fe-4S] cluster</name>
        <dbReference type="ChEBI" id="CHEBI:49883"/>
    </cofactor>
    <text evidence="1">Binds 1 [4Fe-4S] cluster.</text>
</comment>
<comment type="cofactor">
    <cofactor evidence="1">
        <name>Mo-bis(molybdopterin guanine dinucleotide)</name>
        <dbReference type="ChEBI" id="CHEBI:60539"/>
    </cofactor>
    <text evidence="1">Binds 1 molybdenum-bis(molybdopterin guanine dinucleotide) (Mo-bis-MGD) cofactor per subunit.</text>
</comment>
<comment type="subunit">
    <text evidence="1">Component of the periplasmic nitrate reductase NapAB complex composed of NapA and NapB.</text>
</comment>
<comment type="subcellular location">
    <subcellularLocation>
        <location evidence="1">Periplasm</location>
    </subcellularLocation>
</comment>
<comment type="PTM">
    <text evidence="1">Predicted to be exported by the Tat system. The position of the signal peptide cleavage has not been experimentally proven.</text>
</comment>
<comment type="similarity">
    <text evidence="1">Belongs to the prokaryotic molybdopterin-containing oxidoreductase family. NasA/NapA/NarB subfamily.</text>
</comment>
<dbReference type="EC" id="1.9.6.1" evidence="1"/>
<dbReference type="EMBL" id="CP000026">
    <property type="protein sequence ID" value="AAV76606.1"/>
    <property type="molecule type" value="Genomic_DNA"/>
</dbReference>
<dbReference type="RefSeq" id="WP_000778090.1">
    <property type="nucleotide sequence ID" value="NC_006511.1"/>
</dbReference>
<dbReference type="SMR" id="Q5PI61"/>
<dbReference type="KEGG" id="spt:SPA0605"/>
<dbReference type="HOGENOM" id="CLU_000422_13_4_6"/>
<dbReference type="Proteomes" id="UP000008185">
    <property type="component" value="Chromosome"/>
</dbReference>
<dbReference type="GO" id="GO:0016020">
    <property type="term" value="C:membrane"/>
    <property type="evidence" value="ECO:0007669"/>
    <property type="project" value="TreeGrafter"/>
</dbReference>
<dbReference type="GO" id="GO:0009325">
    <property type="term" value="C:nitrate reductase complex"/>
    <property type="evidence" value="ECO:0007669"/>
    <property type="project" value="TreeGrafter"/>
</dbReference>
<dbReference type="GO" id="GO:0042597">
    <property type="term" value="C:periplasmic space"/>
    <property type="evidence" value="ECO:0007669"/>
    <property type="project" value="UniProtKB-SubCell"/>
</dbReference>
<dbReference type="GO" id="GO:0051539">
    <property type="term" value="F:4 iron, 4 sulfur cluster binding"/>
    <property type="evidence" value="ECO:0007669"/>
    <property type="project" value="UniProtKB-KW"/>
</dbReference>
<dbReference type="GO" id="GO:0009055">
    <property type="term" value="F:electron transfer activity"/>
    <property type="evidence" value="ECO:0007669"/>
    <property type="project" value="UniProtKB-UniRule"/>
</dbReference>
<dbReference type="GO" id="GO:0005506">
    <property type="term" value="F:iron ion binding"/>
    <property type="evidence" value="ECO:0007669"/>
    <property type="project" value="UniProtKB-UniRule"/>
</dbReference>
<dbReference type="GO" id="GO:0030151">
    <property type="term" value="F:molybdenum ion binding"/>
    <property type="evidence" value="ECO:0007669"/>
    <property type="project" value="InterPro"/>
</dbReference>
<dbReference type="GO" id="GO:0043546">
    <property type="term" value="F:molybdopterin cofactor binding"/>
    <property type="evidence" value="ECO:0007669"/>
    <property type="project" value="InterPro"/>
</dbReference>
<dbReference type="GO" id="GO:0050140">
    <property type="term" value="F:nitrate reductase (cytochrome) activity"/>
    <property type="evidence" value="ECO:0007669"/>
    <property type="project" value="UniProtKB-EC"/>
</dbReference>
<dbReference type="GO" id="GO:0045333">
    <property type="term" value="P:cellular respiration"/>
    <property type="evidence" value="ECO:0007669"/>
    <property type="project" value="UniProtKB-ARBA"/>
</dbReference>
<dbReference type="GO" id="GO:0006777">
    <property type="term" value="P:Mo-molybdopterin cofactor biosynthetic process"/>
    <property type="evidence" value="ECO:0007669"/>
    <property type="project" value="UniProtKB-UniRule"/>
</dbReference>
<dbReference type="GO" id="GO:0042128">
    <property type="term" value="P:nitrate assimilation"/>
    <property type="evidence" value="ECO:0007669"/>
    <property type="project" value="UniProtKB-UniRule"/>
</dbReference>
<dbReference type="CDD" id="cd02791">
    <property type="entry name" value="MopB_CT_Nitrate-R-NapA-like"/>
    <property type="match status" value="1"/>
</dbReference>
<dbReference type="CDD" id="cd02754">
    <property type="entry name" value="MopB_Nitrate-R-NapA-like"/>
    <property type="match status" value="1"/>
</dbReference>
<dbReference type="FunFam" id="2.40.40.20:FF:000005">
    <property type="entry name" value="Periplasmic nitrate reductase"/>
    <property type="match status" value="1"/>
</dbReference>
<dbReference type="FunFam" id="3.40.228.10:FF:000001">
    <property type="entry name" value="Periplasmic nitrate reductase"/>
    <property type="match status" value="1"/>
</dbReference>
<dbReference type="Gene3D" id="2.40.40.20">
    <property type="match status" value="1"/>
</dbReference>
<dbReference type="Gene3D" id="3.30.200.210">
    <property type="match status" value="1"/>
</dbReference>
<dbReference type="Gene3D" id="3.40.50.740">
    <property type="match status" value="1"/>
</dbReference>
<dbReference type="Gene3D" id="3.40.228.10">
    <property type="entry name" value="Dimethylsulfoxide Reductase, domain 2"/>
    <property type="match status" value="1"/>
</dbReference>
<dbReference type="HAMAP" id="MF_01630">
    <property type="entry name" value="Nitrate_reduct_NapA"/>
    <property type="match status" value="1"/>
</dbReference>
<dbReference type="InterPro" id="IPR009010">
    <property type="entry name" value="Asp_de-COase-like_dom_sf"/>
</dbReference>
<dbReference type="InterPro" id="IPR041957">
    <property type="entry name" value="CT_Nitrate-R-NapA-like"/>
</dbReference>
<dbReference type="InterPro" id="IPR006657">
    <property type="entry name" value="MoPterin_dinucl-bd_dom"/>
</dbReference>
<dbReference type="InterPro" id="IPR006656">
    <property type="entry name" value="Mopterin_OxRdtase"/>
</dbReference>
<dbReference type="InterPro" id="IPR006963">
    <property type="entry name" value="Mopterin_OxRdtase_4Fe-4S_dom"/>
</dbReference>
<dbReference type="InterPro" id="IPR027467">
    <property type="entry name" value="MopterinOxRdtase_cofactor_BS"/>
</dbReference>
<dbReference type="InterPro" id="IPR010051">
    <property type="entry name" value="Periplasm_NO3_reductase_lsu"/>
</dbReference>
<dbReference type="InterPro" id="IPR050123">
    <property type="entry name" value="Prok_molybdopt-oxidoreductase"/>
</dbReference>
<dbReference type="InterPro" id="IPR006311">
    <property type="entry name" value="TAT_signal"/>
</dbReference>
<dbReference type="InterPro" id="IPR019546">
    <property type="entry name" value="TAT_signal_bac_arc"/>
</dbReference>
<dbReference type="NCBIfam" id="TIGR01706">
    <property type="entry name" value="NAPA"/>
    <property type="match status" value="1"/>
</dbReference>
<dbReference type="NCBIfam" id="NF010055">
    <property type="entry name" value="PRK13532.1"/>
    <property type="match status" value="1"/>
</dbReference>
<dbReference type="NCBIfam" id="TIGR01409">
    <property type="entry name" value="TAT_signal_seq"/>
    <property type="match status" value="1"/>
</dbReference>
<dbReference type="PANTHER" id="PTHR43105:SF11">
    <property type="entry name" value="PERIPLASMIC NITRATE REDUCTASE"/>
    <property type="match status" value="1"/>
</dbReference>
<dbReference type="PANTHER" id="PTHR43105">
    <property type="entry name" value="RESPIRATORY NITRATE REDUCTASE"/>
    <property type="match status" value="1"/>
</dbReference>
<dbReference type="Pfam" id="PF04879">
    <property type="entry name" value="Molybdop_Fe4S4"/>
    <property type="match status" value="1"/>
</dbReference>
<dbReference type="Pfam" id="PF00384">
    <property type="entry name" value="Molybdopterin"/>
    <property type="match status" value="1"/>
</dbReference>
<dbReference type="Pfam" id="PF01568">
    <property type="entry name" value="Molydop_binding"/>
    <property type="match status" value="1"/>
</dbReference>
<dbReference type="SMART" id="SM00926">
    <property type="entry name" value="Molybdop_Fe4S4"/>
    <property type="match status" value="1"/>
</dbReference>
<dbReference type="SUPFAM" id="SSF50692">
    <property type="entry name" value="ADC-like"/>
    <property type="match status" value="1"/>
</dbReference>
<dbReference type="SUPFAM" id="SSF53706">
    <property type="entry name" value="Formate dehydrogenase/DMSO reductase, domains 1-3"/>
    <property type="match status" value="1"/>
</dbReference>
<dbReference type="PROSITE" id="PS51669">
    <property type="entry name" value="4FE4S_MOW_BIS_MGD"/>
    <property type="match status" value="1"/>
</dbReference>
<dbReference type="PROSITE" id="PS00551">
    <property type="entry name" value="MOLYBDOPTERIN_PROK_1"/>
    <property type="match status" value="1"/>
</dbReference>
<dbReference type="PROSITE" id="PS51318">
    <property type="entry name" value="TAT"/>
    <property type="match status" value="1"/>
</dbReference>
<sequence>MKLSRRSFMKANAVAAAAAAAGLSVPGVARAVVGQQEAIKWDKAPCRFCGTGCGVLVGTQQGRVVACQGDPDAPVNRGLNCIKGYFLPKIMYGKDRLTQPMLRMKDGSYHKDGEFTPVSWEQAFDVMEEKFKTALKEKGPEAIGMFGSGQWTIWEGYAAAKLFKAGFRSNNIDPNARHCMASAVVGFMRTFGMDEPMGCYDDIEQADAFVLWGSNMAEMHPILWSRITNRRLSDPNVKVAVLSTFQHRSFELADNGIVFTPQSDLVILNYIANYIIQNNAVNQDFFTKHVNLRKGATDIGYGLRPTHPLEKAAKNPGSDASEPMSFDEYKAFVAEYTLDKTAEMTGVPKDQLEQLAQLYADPNKRVISYWTMGFNQHTRGVWANNLVYNLHLLTGKISQPGCGPFSLTGQPSACGTAREVGTFSHRLPADMVVTNEKHRDICEKHWQIPAGTIPAKVGLHAVAQDRALKDGKLNVYWVMCNNNMQAGPNINEDRMPGWRDPRNFIIVSDPYPTVSALSADLILPTAMWVEKEGAYGNAERRTQFWRQQIKAPGEAKSDLWQLVQFSRRFKTEEVWPEALLAQKPELRGKTLYDVLFATPAVSKFPLSELKEDQLNDESRELGFYLQKGLFEEYAWFGRGHGHDLAPFDDYHNARGLRWPVVEGKETQWRYSEGNDPYVKAGEGYKFYGKPDGKAVIFALPFEPAAESPDNEYDLWLSTGRVLEHWHTGSMTRRVPELHRAFPEAVVFIHPLDAKARDLRRGDKVKVSSRRGEVISIVETRGRNRPPQGLVYMPFFDAAQLVNNLTLDATDPLSKETDFKKCAVKLAKV</sequence>
<keyword id="KW-0004">4Fe-4S</keyword>
<keyword id="KW-0249">Electron transport</keyword>
<keyword id="KW-0408">Iron</keyword>
<keyword id="KW-0411">Iron-sulfur</keyword>
<keyword id="KW-0479">Metal-binding</keyword>
<keyword id="KW-0500">Molybdenum</keyword>
<keyword id="KW-0534">Nitrate assimilation</keyword>
<keyword id="KW-0560">Oxidoreductase</keyword>
<keyword id="KW-0574">Periplasm</keyword>
<keyword id="KW-0732">Signal</keyword>
<keyword id="KW-0813">Transport</keyword>
<organism>
    <name type="scientific">Salmonella paratyphi A (strain ATCC 9150 / SARB42)</name>
    <dbReference type="NCBI Taxonomy" id="295319"/>
    <lineage>
        <taxon>Bacteria</taxon>
        <taxon>Pseudomonadati</taxon>
        <taxon>Pseudomonadota</taxon>
        <taxon>Gammaproteobacteria</taxon>
        <taxon>Enterobacterales</taxon>
        <taxon>Enterobacteriaceae</taxon>
        <taxon>Salmonella</taxon>
    </lineage>
</organism>
<reference key="1">
    <citation type="journal article" date="2004" name="Nat. Genet.">
        <title>Comparison of genome degradation in Paratyphi A and Typhi, human-restricted serovars of Salmonella enterica that cause typhoid.</title>
        <authorList>
            <person name="McClelland M."/>
            <person name="Sanderson K.E."/>
            <person name="Clifton S.W."/>
            <person name="Latreille P."/>
            <person name="Porwollik S."/>
            <person name="Sabo A."/>
            <person name="Meyer R."/>
            <person name="Bieri T."/>
            <person name="Ozersky P."/>
            <person name="McLellan M."/>
            <person name="Harkins C.R."/>
            <person name="Wang C."/>
            <person name="Nguyen C."/>
            <person name="Berghoff A."/>
            <person name="Elliott G."/>
            <person name="Kohlberg S."/>
            <person name="Strong C."/>
            <person name="Du F."/>
            <person name="Carter J."/>
            <person name="Kremizki C."/>
            <person name="Layman D."/>
            <person name="Leonard S."/>
            <person name="Sun H."/>
            <person name="Fulton L."/>
            <person name="Nash W."/>
            <person name="Miner T."/>
            <person name="Minx P."/>
            <person name="Delehaunty K."/>
            <person name="Fronick C."/>
            <person name="Magrini V."/>
            <person name="Nhan M."/>
            <person name="Warren W."/>
            <person name="Florea L."/>
            <person name="Spieth J."/>
            <person name="Wilson R.K."/>
        </authorList>
    </citation>
    <scope>NUCLEOTIDE SEQUENCE [LARGE SCALE GENOMIC DNA]</scope>
    <source>
        <strain>ATCC 9150 / SARB42</strain>
    </source>
</reference>
<protein>
    <recommendedName>
        <fullName evidence="1">Periplasmic nitrate reductase</fullName>
        <ecNumber evidence="1">1.9.6.1</ecNumber>
    </recommendedName>
</protein>